<reference key="1">
    <citation type="journal article" date="2002" name="Nature">
        <title>The genome sequence of Schizosaccharomyces pombe.</title>
        <authorList>
            <person name="Wood V."/>
            <person name="Gwilliam R."/>
            <person name="Rajandream M.A."/>
            <person name="Lyne M.H."/>
            <person name="Lyne R."/>
            <person name="Stewart A."/>
            <person name="Sgouros J.G."/>
            <person name="Peat N."/>
            <person name="Hayles J."/>
            <person name="Baker S.G."/>
            <person name="Basham D."/>
            <person name="Bowman S."/>
            <person name="Brooks K."/>
            <person name="Brown D."/>
            <person name="Brown S."/>
            <person name="Chillingworth T."/>
            <person name="Churcher C.M."/>
            <person name="Collins M."/>
            <person name="Connor R."/>
            <person name="Cronin A."/>
            <person name="Davis P."/>
            <person name="Feltwell T."/>
            <person name="Fraser A."/>
            <person name="Gentles S."/>
            <person name="Goble A."/>
            <person name="Hamlin N."/>
            <person name="Harris D.E."/>
            <person name="Hidalgo J."/>
            <person name="Hodgson G."/>
            <person name="Holroyd S."/>
            <person name="Hornsby T."/>
            <person name="Howarth S."/>
            <person name="Huckle E.J."/>
            <person name="Hunt S."/>
            <person name="Jagels K."/>
            <person name="James K.D."/>
            <person name="Jones L."/>
            <person name="Jones M."/>
            <person name="Leather S."/>
            <person name="McDonald S."/>
            <person name="McLean J."/>
            <person name="Mooney P."/>
            <person name="Moule S."/>
            <person name="Mungall K.L."/>
            <person name="Murphy L.D."/>
            <person name="Niblett D."/>
            <person name="Odell C."/>
            <person name="Oliver K."/>
            <person name="O'Neil S."/>
            <person name="Pearson D."/>
            <person name="Quail M.A."/>
            <person name="Rabbinowitsch E."/>
            <person name="Rutherford K.M."/>
            <person name="Rutter S."/>
            <person name="Saunders D."/>
            <person name="Seeger K."/>
            <person name="Sharp S."/>
            <person name="Skelton J."/>
            <person name="Simmonds M.N."/>
            <person name="Squares R."/>
            <person name="Squares S."/>
            <person name="Stevens K."/>
            <person name="Taylor K."/>
            <person name="Taylor R.G."/>
            <person name="Tivey A."/>
            <person name="Walsh S.V."/>
            <person name="Warren T."/>
            <person name="Whitehead S."/>
            <person name="Woodward J.R."/>
            <person name="Volckaert G."/>
            <person name="Aert R."/>
            <person name="Robben J."/>
            <person name="Grymonprez B."/>
            <person name="Weltjens I."/>
            <person name="Vanstreels E."/>
            <person name="Rieger M."/>
            <person name="Schaefer M."/>
            <person name="Mueller-Auer S."/>
            <person name="Gabel C."/>
            <person name="Fuchs M."/>
            <person name="Duesterhoeft A."/>
            <person name="Fritzc C."/>
            <person name="Holzer E."/>
            <person name="Moestl D."/>
            <person name="Hilbert H."/>
            <person name="Borzym K."/>
            <person name="Langer I."/>
            <person name="Beck A."/>
            <person name="Lehrach H."/>
            <person name="Reinhardt R."/>
            <person name="Pohl T.M."/>
            <person name="Eger P."/>
            <person name="Zimmermann W."/>
            <person name="Wedler H."/>
            <person name="Wambutt R."/>
            <person name="Purnelle B."/>
            <person name="Goffeau A."/>
            <person name="Cadieu E."/>
            <person name="Dreano S."/>
            <person name="Gloux S."/>
            <person name="Lelaure V."/>
            <person name="Mottier S."/>
            <person name="Galibert F."/>
            <person name="Aves S.J."/>
            <person name="Xiang Z."/>
            <person name="Hunt C."/>
            <person name="Moore K."/>
            <person name="Hurst S.M."/>
            <person name="Lucas M."/>
            <person name="Rochet M."/>
            <person name="Gaillardin C."/>
            <person name="Tallada V.A."/>
            <person name="Garzon A."/>
            <person name="Thode G."/>
            <person name="Daga R.R."/>
            <person name="Cruzado L."/>
            <person name="Jimenez J."/>
            <person name="Sanchez M."/>
            <person name="del Rey F."/>
            <person name="Benito J."/>
            <person name="Dominguez A."/>
            <person name="Revuelta J.L."/>
            <person name="Moreno S."/>
            <person name="Armstrong J."/>
            <person name="Forsburg S.L."/>
            <person name="Cerutti L."/>
            <person name="Lowe T."/>
            <person name="McCombie W.R."/>
            <person name="Paulsen I."/>
            <person name="Potashkin J."/>
            <person name="Shpakovski G.V."/>
            <person name="Ussery D."/>
            <person name="Barrell B.G."/>
            <person name="Nurse P."/>
        </authorList>
    </citation>
    <scope>NUCLEOTIDE SEQUENCE [LARGE SCALE GENOMIC DNA]</scope>
    <source>
        <strain>972 / ATCC 24843</strain>
    </source>
</reference>
<reference key="2">
    <citation type="journal article" date="2006" name="Nat. Biotechnol.">
        <title>ORFeome cloning and global analysis of protein localization in the fission yeast Schizosaccharomyces pombe.</title>
        <authorList>
            <person name="Matsuyama A."/>
            <person name="Arai R."/>
            <person name="Yashiroda Y."/>
            <person name="Shirai A."/>
            <person name="Kamata A."/>
            <person name="Sekido S."/>
            <person name="Kobayashi Y."/>
            <person name="Hashimoto A."/>
            <person name="Hamamoto M."/>
            <person name="Hiraoka Y."/>
            <person name="Horinouchi S."/>
            <person name="Yoshida M."/>
        </authorList>
    </citation>
    <scope>SUBCELLULAR LOCATION [LARGE SCALE ANALYSIS]</scope>
</reference>
<gene>
    <name type="primary">cpd1</name>
    <name type="synonym">trm61</name>
    <name type="ORF">SPAC9G1.12</name>
</gene>
<dbReference type="EC" id="2.1.1.220"/>
<dbReference type="EMBL" id="CU329670">
    <property type="protein sequence ID" value="CAB11496.1"/>
    <property type="molecule type" value="Genomic_DNA"/>
</dbReference>
<dbReference type="PIR" id="T39235">
    <property type="entry name" value="T39235"/>
</dbReference>
<dbReference type="RefSeq" id="NP_593567.1">
    <property type="nucleotide sequence ID" value="NM_001019000.2"/>
</dbReference>
<dbReference type="SMR" id="O14307"/>
<dbReference type="BioGRID" id="278667">
    <property type="interactions" value="86"/>
</dbReference>
<dbReference type="FunCoup" id="O14307">
    <property type="interactions" value="252"/>
</dbReference>
<dbReference type="STRING" id="284812.O14307"/>
<dbReference type="iPTMnet" id="O14307"/>
<dbReference type="PaxDb" id="4896-SPAC9G1.12.1"/>
<dbReference type="EnsemblFungi" id="SPAC9G1.12.1">
    <property type="protein sequence ID" value="SPAC9G1.12.1:pep"/>
    <property type="gene ID" value="SPAC9G1.12"/>
</dbReference>
<dbReference type="GeneID" id="2542192"/>
<dbReference type="KEGG" id="spo:2542192"/>
<dbReference type="PomBase" id="SPAC9G1.12">
    <property type="gene designation" value="cpd1"/>
</dbReference>
<dbReference type="VEuPathDB" id="FungiDB:SPAC9G1.12"/>
<dbReference type="eggNOG" id="KOG2915">
    <property type="taxonomic scope" value="Eukaryota"/>
</dbReference>
<dbReference type="HOGENOM" id="CLU_025402_4_0_1"/>
<dbReference type="InParanoid" id="O14307"/>
<dbReference type="OMA" id="RPDHRMI"/>
<dbReference type="PhylomeDB" id="O14307"/>
<dbReference type="PRO" id="PR:O14307"/>
<dbReference type="Proteomes" id="UP000002485">
    <property type="component" value="Chromosome I"/>
</dbReference>
<dbReference type="GO" id="GO:0005829">
    <property type="term" value="C:cytosol"/>
    <property type="evidence" value="ECO:0007005"/>
    <property type="project" value="PomBase"/>
</dbReference>
<dbReference type="GO" id="GO:0005634">
    <property type="term" value="C:nucleus"/>
    <property type="evidence" value="ECO:0007005"/>
    <property type="project" value="PomBase"/>
</dbReference>
<dbReference type="GO" id="GO:0031515">
    <property type="term" value="C:tRNA (m1A) methyltransferase complex"/>
    <property type="evidence" value="ECO:0000318"/>
    <property type="project" value="GO_Central"/>
</dbReference>
<dbReference type="GO" id="GO:0160107">
    <property type="term" value="F:tRNA (adenine(58)-N1)-methyltransferase activity"/>
    <property type="evidence" value="ECO:0000314"/>
    <property type="project" value="PomBase"/>
</dbReference>
<dbReference type="GO" id="GO:0030488">
    <property type="term" value="P:tRNA methylation"/>
    <property type="evidence" value="ECO:0000314"/>
    <property type="project" value="PomBase"/>
</dbReference>
<dbReference type="FunFam" id="3.10.330.20:FF:000002">
    <property type="entry name" value="tRNA (adenine(58)-N(1))-methyltransferase catalytic subunit TRMT61A"/>
    <property type="match status" value="1"/>
</dbReference>
<dbReference type="Gene3D" id="3.10.330.20">
    <property type="match status" value="1"/>
</dbReference>
<dbReference type="Gene3D" id="3.40.50.150">
    <property type="entry name" value="Vaccinia Virus protein VP39"/>
    <property type="match status" value="1"/>
</dbReference>
<dbReference type="InterPro" id="IPR029063">
    <property type="entry name" value="SAM-dependent_MTases_sf"/>
</dbReference>
<dbReference type="InterPro" id="IPR049470">
    <property type="entry name" value="TRM61_C"/>
</dbReference>
<dbReference type="InterPro" id="IPR014816">
    <property type="entry name" value="tRNA_MeTrfase_Gcd14"/>
</dbReference>
<dbReference type="PANTHER" id="PTHR12133">
    <property type="entry name" value="TRNA (ADENINE(58)-N(1))-METHYLTRANSFERASE"/>
    <property type="match status" value="1"/>
</dbReference>
<dbReference type="PANTHER" id="PTHR12133:SF2">
    <property type="entry name" value="TRNA (ADENINE(58)-N(1))-METHYLTRANSFERASE CATALYTIC SUBUNIT TRMT61A"/>
    <property type="match status" value="1"/>
</dbReference>
<dbReference type="Pfam" id="PF08704">
    <property type="entry name" value="GCD14"/>
    <property type="match status" value="1"/>
</dbReference>
<dbReference type="PIRSF" id="PIRSF017269">
    <property type="entry name" value="GCD14"/>
    <property type="match status" value="1"/>
</dbReference>
<dbReference type="SUPFAM" id="SSF53335">
    <property type="entry name" value="S-adenosyl-L-methionine-dependent methyltransferases"/>
    <property type="match status" value="1"/>
</dbReference>
<dbReference type="PROSITE" id="PS51620">
    <property type="entry name" value="SAM_TRM61"/>
    <property type="match status" value="1"/>
</dbReference>
<organism>
    <name type="scientific">Schizosaccharomyces pombe (strain 972 / ATCC 24843)</name>
    <name type="common">Fission yeast</name>
    <dbReference type="NCBI Taxonomy" id="284812"/>
    <lineage>
        <taxon>Eukaryota</taxon>
        <taxon>Fungi</taxon>
        <taxon>Dikarya</taxon>
        <taxon>Ascomycota</taxon>
        <taxon>Taphrinomycotina</taxon>
        <taxon>Schizosaccharomycetes</taxon>
        <taxon>Schizosaccharomycetales</taxon>
        <taxon>Schizosaccharomycetaceae</taxon>
        <taxon>Schizosaccharomyces</taxon>
    </lineage>
</organism>
<name>TRM61_SCHPO</name>
<accession>O14307</accession>
<proteinExistence type="inferred from homology"/>
<keyword id="KW-0489">Methyltransferase</keyword>
<keyword id="KW-0539">Nucleus</keyword>
<keyword id="KW-1185">Reference proteome</keyword>
<keyword id="KW-0949">S-adenosyl-L-methionine</keyword>
<keyword id="KW-0808">Transferase</keyword>
<keyword id="KW-0819">tRNA processing</keyword>
<sequence length="364" mass="41733">MVFADYKQRVENGDLAVAWIGRNKLIPLHIEAEKTFHNQYGAFPHSEMIGKRYGEQIASTAKQGFIYLLQPTPELWTLALPHRTQIVYTPDIALIHQKLRITYGTRVIEAGTGSASMSHAISRTVGPLGRLFTFEYHATRYQTALQEFREHEMLIDVGGNTHLTHRDVCKDGFLDTEVKVDAIFLDLPAPWEAIPHLSNHVNHDKSTRICCFSPCIEQIQHSAEALRELGWCDIEMIEVDYKQWAARKSRIVHIDEAIDRLKEVKRRRIEGFERRKMRREQNLSSDAKVEDQDNDSMLGENKSSVSTETALKPVTNKRIREGDGNYEWTDVARVDSNLKSHTSYLLFAVHLPSQLDKQNQETGP</sequence>
<feature type="chain" id="PRO_0000256175" description="tRNA (adenine(58)-N(1))-methyltransferase catalytic subunit trm61">
    <location>
        <begin position="1"/>
        <end position="364"/>
    </location>
</feature>
<feature type="region of interest" description="Disordered" evidence="4">
    <location>
        <begin position="280"/>
        <end position="309"/>
    </location>
</feature>
<feature type="binding site" evidence="2">
    <location>
        <begin position="114"/>
        <end position="116"/>
    </location>
    <ligand>
        <name>S-adenosyl-L-methionine</name>
        <dbReference type="ChEBI" id="CHEBI:59789"/>
    </ligand>
</feature>
<feature type="binding site" evidence="2 3">
    <location>
        <position position="135"/>
    </location>
    <ligand>
        <name>S-adenosyl-L-methionine</name>
        <dbReference type="ChEBI" id="CHEBI:59789"/>
    </ligand>
</feature>
<feature type="binding site" evidence="2">
    <location>
        <position position="140"/>
    </location>
    <ligand>
        <name>S-adenosyl-L-methionine</name>
        <dbReference type="ChEBI" id="CHEBI:59789"/>
    </ligand>
</feature>
<feature type="binding site" evidence="2">
    <location>
        <begin position="167"/>
        <end position="168"/>
    </location>
    <ligand>
        <name>S-adenosyl-L-methionine</name>
        <dbReference type="ChEBI" id="CHEBI:59789"/>
    </ligand>
</feature>
<feature type="binding site" evidence="2 3">
    <location>
        <position position="186"/>
    </location>
    <ligand>
        <name>S-adenosyl-L-methionine</name>
        <dbReference type="ChEBI" id="CHEBI:59789"/>
    </ligand>
</feature>
<protein>
    <recommendedName>
        <fullName>tRNA (adenine(58)-N(1))-methyltransferase catalytic subunit trm61</fullName>
        <ecNumber>2.1.1.220</ecNumber>
    </recommendedName>
    <alternativeName>
        <fullName>tRNA(m1A58)-methyltransferase subunit trm61</fullName>
        <shortName>tRNA(m1A58)MTase subunit trm61</shortName>
    </alternativeName>
</protein>
<comment type="function">
    <text evidence="1">Catalytic subunit of tRNA (adenine-N(1)-)-methyltransferase, which catalyzes the formation of N(1)-methyladenine at position 58 (m1A58) in initiator methionyl-tRNA.</text>
</comment>
<comment type="catalytic activity">
    <reaction evidence="3">
        <text>adenosine(58) in tRNA + S-adenosyl-L-methionine = N(1)-methyladenosine(58) in tRNA + S-adenosyl-L-homocysteine + H(+)</text>
        <dbReference type="Rhea" id="RHEA:43152"/>
        <dbReference type="Rhea" id="RHEA-COMP:10365"/>
        <dbReference type="Rhea" id="RHEA-COMP:10366"/>
        <dbReference type="ChEBI" id="CHEBI:15378"/>
        <dbReference type="ChEBI" id="CHEBI:57856"/>
        <dbReference type="ChEBI" id="CHEBI:59789"/>
        <dbReference type="ChEBI" id="CHEBI:74411"/>
        <dbReference type="ChEBI" id="CHEBI:74491"/>
        <dbReference type="EC" id="2.1.1.220"/>
    </reaction>
</comment>
<comment type="subunit">
    <text evidence="1">Heterotetramer; composed of two copies of TRM6 and two copies of TRM61.</text>
</comment>
<comment type="subcellular location">
    <subcellularLocation>
        <location evidence="5">Nucleus</location>
    </subcellularLocation>
</comment>
<comment type="similarity">
    <text evidence="3">Belongs to the class I-like SAM-binding methyltransferase superfamily. TRM61 family.</text>
</comment>
<evidence type="ECO:0000250" key="1">
    <source>
        <dbReference type="UniProtKB" id="P46959"/>
    </source>
</evidence>
<evidence type="ECO:0000250" key="2">
    <source>
        <dbReference type="UniProtKB" id="Q96FX7"/>
    </source>
</evidence>
<evidence type="ECO:0000255" key="3">
    <source>
        <dbReference type="PROSITE-ProRule" id="PRU00952"/>
    </source>
</evidence>
<evidence type="ECO:0000256" key="4">
    <source>
        <dbReference type="SAM" id="MobiDB-lite"/>
    </source>
</evidence>
<evidence type="ECO:0000269" key="5">
    <source>
    </source>
</evidence>